<accession>O78432</accession>
<sequence length="310" mass="34728">MTDLPFTLDQLRILKAIASEGSFKKAAESLYISQPAVSLQIQNLEKQLNIPIFDRANRKAVFTEEGDTLLRYGNRVLSLCDETCRAIEDLKTLQGGTLIIGASQTTGTYLMPRLIGLFRHKYPQIAVQLQVHSTRRVAWSVANGQVNLAVVGGKVPDELRSKLQITPYVDDELALILPKLHPFSKLEVIQKEDLYRLRFITLDKQSTIRRVIDTVLNEHGIDSARFKIEMELNSVEAIKNAVQSGLGAAFVSISAIAKELELGLLHWVKIEGVVIKRTLSIITNPSRYQAKASEIFSKEILTLFVTPYEI</sequence>
<organism>
    <name type="scientific">Guillardia theta</name>
    <name type="common">Cryptophyte</name>
    <name type="synonym">Cryptomonas phi</name>
    <dbReference type="NCBI Taxonomy" id="55529"/>
    <lineage>
        <taxon>Eukaryota</taxon>
        <taxon>Cryptophyceae</taxon>
        <taxon>Pyrenomonadales</taxon>
        <taxon>Geminigeraceae</taxon>
        <taxon>Guillardia</taxon>
    </lineage>
</organism>
<reference key="1">
    <citation type="journal article" date="1999" name="J. Mol. Evol.">
        <title>The plastid genome of the cryptophyte alga, Guillardia theta: complete sequence and conserved synteny groups confirm its common ancestry with red algae.</title>
        <authorList>
            <person name="Douglas S.E."/>
            <person name="Penny S.L."/>
        </authorList>
    </citation>
    <scope>NUCLEOTIDE SEQUENCE [LARGE SCALE GENOMIC DNA]</scope>
</reference>
<evidence type="ECO:0000250" key="1"/>
<evidence type="ECO:0000255" key="2">
    <source>
        <dbReference type="PROSITE-ProRule" id="PRU00253"/>
    </source>
</evidence>
<evidence type="ECO:0000305" key="3"/>
<proteinExistence type="inferred from homology"/>
<feature type="chain" id="PRO_0000105771" description="Probable RuBisCO transcriptional regulator">
    <location>
        <begin position="1"/>
        <end position="310"/>
    </location>
</feature>
<feature type="domain" description="HTH lysR-type" evidence="2">
    <location>
        <begin position="6"/>
        <end position="63"/>
    </location>
</feature>
<feature type="DNA-binding region" description="H-T-H motif" evidence="2">
    <location>
        <begin position="23"/>
        <end position="42"/>
    </location>
</feature>
<keyword id="KW-0150">Chloroplast</keyword>
<keyword id="KW-0238">DNA-binding</keyword>
<keyword id="KW-0934">Plastid</keyword>
<keyword id="KW-0804">Transcription</keyword>
<keyword id="KW-0805">Transcription regulation</keyword>
<gene>
    <name type="primary">rbcR</name>
    <name type="synonym">ycf30</name>
</gene>
<dbReference type="EMBL" id="AF041468">
    <property type="protein sequence ID" value="AAC35617.1"/>
    <property type="molecule type" value="Genomic_DNA"/>
</dbReference>
<dbReference type="RefSeq" id="NP_050683.1">
    <property type="nucleotide sequence ID" value="NC_000926.1"/>
</dbReference>
<dbReference type="SMR" id="O78432"/>
<dbReference type="GeneID" id="856973"/>
<dbReference type="HOGENOM" id="CLU_039613_6_1_1"/>
<dbReference type="OMA" id="LLCREDH"/>
<dbReference type="GO" id="GO:0009507">
    <property type="term" value="C:chloroplast"/>
    <property type="evidence" value="ECO:0007669"/>
    <property type="project" value="UniProtKB-SubCell"/>
</dbReference>
<dbReference type="GO" id="GO:0003700">
    <property type="term" value="F:DNA-binding transcription factor activity"/>
    <property type="evidence" value="ECO:0007669"/>
    <property type="project" value="InterPro"/>
</dbReference>
<dbReference type="GO" id="GO:0000976">
    <property type="term" value="F:transcription cis-regulatory region binding"/>
    <property type="evidence" value="ECO:0007669"/>
    <property type="project" value="TreeGrafter"/>
</dbReference>
<dbReference type="CDD" id="cd08420">
    <property type="entry name" value="PBP2_CysL_like"/>
    <property type="match status" value="1"/>
</dbReference>
<dbReference type="FunFam" id="1.10.10.10:FF:000001">
    <property type="entry name" value="LysR family transcriptional regulator"/>
    <property type="match status" value="1"/>
</dbReference>
<dbReference type="Gene3D" id="3.40.190.290">
    <property type="match status" value="1"/>
</dbReference>
<dbReference type="Gene3D" id="1.10.10.10">
    <property type="entry name" value="Winged helix-like DNA-binding domain superfamily/Winged helix DNA-binding domain"/>
    <property type="match status" value="1"/>
</dbReference>
<dbReference type="InterPro" id="IPR005119">
    <property type="entry name" value="LysR_subst-bd"/>
</dbReference>
<dbReference type="InterPro" id="IPR000847">
    <property type="entry name" value="Tscrpt_reg_HTH_LysR"/>
</dbReference>
<dbReference type="InterPro" id="IPR036388">
    <property type="entry name" value="WH-like_DNA-bd_sf"/>
</dbReference>
<dbReference type="InterPro" id="IPR036390">
    <property type="entry name" value="WH_DNA-bd_sf"/>
</dbReference>
<dbReference type="PANTHER" id="PTHR30126">
    <property type="entry name" value="HTH-TYPE TRANSCRIPTIONAL REGULATOR"/>
    <property type="match status" value="1"/>
</dbReference>
<dbReference type="PANTHER" id="PTHR30126:SF39">
    <property type="entry name" value="HTH-TYPE TRANSCRIPTIONAL REGULATOR CYSL"/>
    <property type="match status" value="1"/>
</dbReference>
<dbReference type="Pfam" id="PF00126">
    <property type="entry name" value="HTH_1"/>
    <property type="match status" value="1"/>
</dbReference>
<dbReference type="Pfam" id="PF03466">
    <property type="entry name" value="LysR_substrate"/>
    <property type="match status" value="1"/>
</dbReference>
<dbReference type="PRINTS" id="PR00039">
    <property type="entry name" value="HTHLYSR"/>
</dbReference>
<dbReference type="SUPFAM" id="SSF53850">
    <property type="entry name" value="Periplasmic binding protein-like II"/>
    <property type="match status" value="1"/>
</dbReference>
<dbReference type="SUPFAM" id="SSF46785">
    <property type="entry name" value="Winged helix' DNA-binding domain"/>
    <property type="match status" value="1"/>
</dbReference>
<dbReference type="PROSITE" id="PS50931">
    <property type="entry name" value="HTH_LYSR"/>
    <property type="match status" value="1"/>
</dbReference>
<geneLocation type="chloroplast"/>
<name>RBCR_GUITH</name>
<comment type="function">
    <text evidence="1">Trans-acting transcriptional regulator of RuBisCO genes (rbcL and rbcS) expression.</text>
</comment>
<comment type="subcellular location">
    <subcellularLocation>
        <location>Plastid</location>
        <location>Chloroplast</location>
    </subcellularLocation>
</comment>
<comment type="similarity">
    <text evidence="3">Belongs to the LysR transcriptional regulatory family.</text>
</comment>
<protein>
    <recommendedName>
        <fullName>Probable RuBisCO transcriptional regulator</fullName>
    </recommendedName>
</protein>